<name>TRPB_PHOV8</name>
<sequence length="399" mass="43984">MKTYQVNKEGYYGEFGGAYIPEILHRCVEELQNAYSKVLESEGFKQEFHQLLRDYVGRPSPLYLANRLSKKYGCKIYLKREDLNHTGAHKINNAIGQVLLAKRMGKKRIIAETGAGQHGVATATVCALMNMQCIVYMGKTDVERQHINVEKMKMLGAEVRPVTSGNMTLKDATNEAIRDWCCHPADTYYVIGSTVGPHPYPDMVARLQSVISEEIKKQLKEQEGREYPDYLMACVGGGSNAAGTIYHYIDDERVQIVLAEAGGKGIDTGFSAATIQLGKMGIIHGAKTLVIQNEDGQIEEPYSISAGLDYPGIGPMHANLAKQQRALVLAINDDEAIRAAFELTRLEGIIPALESAHALGALDKMRFKPTDIVVLTVSGRGDKDIETYLKESGTRTSLQ</sequence>
<keyword id="KW-0028">Amino-acid biosynthesis</keyword>
<keyword id="KW-0057">Aromatic amino acid biosynthesis</keyword>
<keyword id="KW-0456">Lyase</keyword>
<keyword id="KW-0663">Pyridoxal phosphate</keyword>
<keyword id="KW-0822">Tryptophan biosynthesis</keyword>
<accession>A6L7M5</accession>
<proteinExistence type="inferred from homology"/>
<comment type="function">
    <text evidence="1">The beta subunit is responsible for the synthesis of L-tryptophan from indole and L-serine.</text>
</comment>
<comment type="catalytic activity">
    <reaction evidence="1">
        <text>(1S,2R)-1-C-(indol-3-yl)glycerol 3-phosphate + L-serine = D-glyceraldehyde 3-phosphate + L-tryptophan + H2O</text>
        <dbReference type="Rhea" id="RHEA:10532"/>
        <dbReference type="ChEBI" id="CHEBI:15377"/>
        <dbReference type="ChEBI" id="CHEBI:33384"/>
        <dbReference type="ChEBI" id="CHEBI:57912"/>
        <dbReference type="ChEBI" id="CHEBI:58866"/>
        <dbReference type="ChEBI" id="CHEBI:59776"/>
        <dbReference type="EC" id="4.2.1.20"/>
    </reaction>
</comment>
<comment type="cofactor">
    <cofactor evidence="1">
        <name>pyridoxal 5'-phosphate</name>
        <dbReference type="ChEBI" id="CHEBI:597326"/>
    </cofactor>
</comment>
<comment type="pathway">
    <text evidence="1">Amino-acid biosynthesis; L-tryptophan biosynthesis; L-tryptophan from chorismate: step 5/5.</text>
</comment>
<comment type="subunit">
    <text evidence="1">Tetramer of two alpha and two beta chains.</text>
</comment>
<comment type="similarity">
    <text evidence="1">Belongs to the TrpB family.</text>
</comment>
<reference key="1">
    <citation type="journal article" date="2007" name="PLoS Biol.">
        <title>Evolution of symbiotic bacteria in the distal human intestine.</title>
        <authorList>
            <person name="Xu J."/>
            <person name="Mahowald M.A."/>
            <person name="Ley R.E."/>
            <person name="Lozupone C.A."/>
            <person name="Hamady M."/>
            <person name="Martens E.C."/>
            <person name="Henrissat B."/>
            <person name="Coutinho P.M."/>
            <person name="Minx P."/>
            <person name="Latreille P."/>
            <person name="Cordum H."/>
            <person name="Van Brunt A."/>
            <person name="Kim K."/>
            <person name="Fulton R.S."/>
            <person name="Fulton L.A."/>
            <person name="Clifton S.W."/>
            <person name="Wilson R.K."/>
            <person name="Knight R.D."/>
            <person name="Gordon J.I."/>
        </authorList>
    </citation>
    <scope>NUCLEOTIDE SEQUENCE [LARGE SCALE GENOMIC DNA]</scope>
    <source>
        <strain>ATCC 8482 / DSM 1447 / JCM 5826 / CCUG 4940 / NBRC 14291 / NCTC 11154</strain>
    </source>
</reference>
<protein>
    <recommendedName>
        <fullName evidence="1">Tryptophan synthase beta chain</fullName>
        <ecNumber evidence="1">4.2.1.20</ecNumber>
    </recommendedName>
</protein>
<organism>
    <name type="scientific">Phocaeicola vulgatus (strain ATCC 8482 / DSM 1447 / JCM 5826 / CCUG 4940 / NBRC 14291 / NCTC 11154)</name>
    <name type="common">Bacteroides vulgatus</name>
    <dbReference type="NCBI Taxonomy" id="435590"/>
    <lineage>
        <taxon>Bacteria</taxon>
        <taxon>Pseudomonadati</taxon>
        <taxon>Bacteroidota</taxon>
        <taxon>Bacteroidia</taxon>
        <taxon>Bacteroidales</taxon>
        <taxon>Bacteroidaceae</taxon>
        <taxon>Phocaeicola</taxon>
    </lineage>
</organism>
<gene>
    <name evidence="1" type="primary">trpB</name>
    <name type="ordered locus">BVU_4087</name>
</gene>
<dbReference type="EC" id="4.2.1.20" evidence="1"/>
<dbReference type="EMBL" id="CP000139">
    <property type="protein sequence ID" value="ABR41689.1"/>
    <property type="molecule type" value="Genomic_DNA"/>
</dbReference>
<dbReference type="RefSeq" id="WP_005839791.1">
    <property type="nucleotide sequence ID" value="NZ_JANSWM010000087.1"/>
</dbReference>
<dbReference type="SMR" id="A6L7M5"/>
<dbReference type="STRING" id="435590.BVU_4087"/>
<dbReference type="PaxDb" id="435590-BVU_4087"/>
<dbReference type="GeneID" id="5305046"/>
<dbReference type="KEGG" id="bvu:BVU_4087"/>
<dbReference type="eggNOG" id="COG0133">
    <property type="taxonomic scope" value="Bacteria"/>
</dbReference>
<dbReference type="HOGENOM" id="CLU_016734_3_1_10"/>
<dbReference type="BioCyc" id="BVUL435590:G1G59-4226-MONOMER"/>
<dbReference type="UniPathway" id="UPA00035">
    <property type="reaction ID" value="UER00044"/>
</dbReference>
<dbReference type="Proteomes" id="UP000002861">
    <property type="component" value="Chromosome"/>
</dbReference>
<dbReference type="GO" id="GO:0005737">
    <property type="term" value="C:cytoplasm"/>
    <property type="evidence" value="ECO:0007669"/>
    <property type="project" value="TreeGrafter"/>
</dbReference>
<dbReference type="GO" id="GO:0004834">
    <property type="term" value="F:tryptophan synthase activity"/>
    <property type="evidence" value="ECO:0007669"/>
    <property type="project" value="UniProtKB-UniRule"/>
</dbReference>
<dbReference type="CDD" id="cd06446">
    <property type="entry name" value="Trp-synth_B"/>
    <property type="match status" value="1"/>
</dbReference>
<dbReference type="FunFam" id="3.40.50.1100:FF:000001">
    <property type="entry name" value="Tryptophan synthase beta chain"/>
    <property type="match status" value="1"/>
</dbReference>
<dbReference type="FunFam" id="3.40.50.1100:FF:000004">
    <property type="entry name" value="Tryptophan synthase beta chain"/>
    <property type="match status" value="1"/>
</dbReference>
<dbReference type="Gene3D" id="3.40.50.1100">
    <property type="match status" value="2"/>
</dbReference>
<dbReference type="HAMAP" id="MF_00133">
    <property type="entry name" value="Trp_synth_beta"/>
    <property type="match status" value="1"/>
</dbReference>
<dbReference type="InterPro" id="IPR006653">
    <property type="entry name" value="Trp_synth_b_CS"/>
</dbReference>
<dbReference type="InterPro" id="IPR006654">
    <property type="entry name" value="Trp_synth_beta"/>
</dbReference>
<dbReference type="InterPro" id="IPR023026">
    <property type="entry name" value="Trp_synth_beta/beta-like"/>
</dbReference>
<dbReference type="InterPro" id="IPR001926">
    <property type="entry name" value="TrpB-like_PALP"/>
</dbReference>
<dbReference type="InterPro" id="IPR036052">
    <property type="entry name" value="TrpB-like_PALP_sf"/>
</dbReference>
<dbReference type="NCBIfam" id="TIGR00263">
    <property type="entry name" value="trpB"/>
    <property type="match status" value="1"/>
</dbReference>
<dbReference type="PANTHER" id="PTHR48077:SF3">
    <property type="entry name" value="TRYPTOPHAN SYNTHASE"/>
    <property type="match status" value="1"/>
</dbReference>
<dbReference type="PANTHER" id="PTHR48077">
    <property type="entry name" value="TRYPTOPHAN SYNTHASE-RELATED"/>
    <property type="match status" value="1"/>
</dbReference>
<dbReference type="Pfam" id="PF00291">
    <property type="entry name" value="PALP"/>
    <property type="match status" value="1"/>
</dbReference>
<dbReference type="PIRSF" id="PIRSF001413">
    <property type="entry name" value="Trp_syn_beta"/>
    <property type="match status" value="1"/>
</dbReference>
<dbReference type="SUPFAM" id="SSF53686">
    <property type="entry name" value="Tryptophan synthase beta subunit-like PLP-dependent enzymes"/>
    <property type="match status" value="1"/>
</dbReference>
<dbReference type="PROSITE" id="PS00168">
    <property type="entry name" value="TRP_SYNTHASE_BETA"/>
    <property type="match status" value="1"/>
</dbReference>
<feature type="chain" id="PRO_1000095777" description="Tryptophan synthase beta chain">
    <location>
        <begin position="1"/>
        <end position="399"/>
    </location>
</feature>
<feature type="modified residue" description="N6-(pyridoxal phosphate)lysine" evidence="1">
    <location>
        <position position="90"/>
    </location>
</feature>
<evidence type="ECO:0000255" key="1">
    <source>
        <dbReference type="HAMAP-Rule" id="MF_00133"/>
    </source>
</evidence>